<evidence type="ECO:0000255" key="1">
    <source>
        <dbReference type="HAMAP-Rule" id="MF_00402"/>
    </source>
</evidence>
<evidence type="ECO:0000305" key="2"/>
<gene>
    <name evidence="1" type="primary">rplS</name>
    <name type="ordered locus">AAur_2448</name>
</gene>
<proteinExistence type="inferred from homology"/>
<reference key="1">
    <citation type="journal article" date="2006" name="PLoS Genet.">
        <title>Secrets of soil survival revealed by the genome sequence of Arthrobacter aurescens TC1.</title>
        <authorList>
            <person name="Mongodin E.F."/>
            <person name="Shapir N."/>
            <person name="Daugherty S.C."/>
            <person name="DeBoy R.T."/>
            <person name="Emerson J.B."/>
            <person name="Shvartzbeyn A."/>
            <person name="Radune D."/>
            <person name="Vamathevan J."/>
            <person name="Riggs F."/>
            <person name="Grinberg V."/>
            <person name="Khouri H.M."/>
            <person name="Wackett L.P."/>
            <person name="Nelson K.E."/>
            <person name="Sadowsky M.J."/>
        </authorList>
    </citation>
    <scope>NUCLEOTIDE SEQUENCE [LARGE SCALE GENOMIC DNA]</scope>
    <source>
        <strain>TC1</strain>
    </source>
</reference>
<organism>
    <name type="scientific">Paenarthrobacter aurescens (strain TC1)</name>
    <dbReference type="NCBI Taxonomy" id="290340"/>
    <lineage>
        <taxon>Bacteria</taxon>
        <taxon>Bacillati</taxon>
        <taxon>Actinomycetota</taxon>
        <taxon>Actinomycetes</taxon>
        <taxon>Micrococcales</taxon>
        <taxon>Micrococcaceae</taxon>
        <taxon>Paenarthrobacter</taxon>
    </lineage>
</organism>
<keyword id="KW-0687">Ribonucleoprotein</keyword>
<keyword id="KW-0689">Ribosomal protein</keyword>
<feature type="chain" id="PRO_0000340735" description="Large ribosomal subunit protein bL19">
    <location>
        <begin position="1"/>
        <end position="117"/>
    </location>
</feature>
<comment type="function">
    <text evidence="1">This protein is located at the 30S-50S ribosomal subunit interface and may play a role in the structure and function of the aminoacyl-tRNA binding site.</text>
</comment>
<comment type="similarity">
    <text evidence="1">Belongs to the bacterial ribosomal protein bL19 family.</text>
</comment>
<comment type="sequence caution" evidence="2">
    <conflict type="erroneous initiation">
        <sequence resource="EMBL-CDS" id="ABM07201"/>
    </conflict>
</comment>
<protein>
    <recommendedName>
        <fullName evidence="1">Large ribosomal subunit protein bL19</fullName>
    </recommendedName>
    <alternativeName>
        <fullName evidence="2">50S ribosomal protein L19</fullName>
    </alternativeName>
</protein>
<accession>A1R7G2</accession>
<sequence>MHILDSVDAASLRNDVPEFRAGDTLKVHVNIIEGKNSRVQVFQGFVLGRQGDGVRETFTVRKVSFGVGVERTFPVHSPIIDKIEVVTKGDVRRAKLYYMRALRGKAAKIKEKRDFAK</sequence>
<name>RL19_PAEAT</name>
<dbReference type="EMBL" id="CP000474">
    <property type="protein sequence ID" value="ABM07201.1"/>
    <property type="status" value="ALT_INIT"/>
    <property type="molecule type" value="Genomic_DNA"/>
</dbReference>
<dbReference type="RefSeq" id="WP_014922079.1">
    <property type="nucleotide sequence ID" value="NC_008711.1"/>
</dbReference>
<dbReference type="SMR" id="A1R7G2"/>
<dbReference type="STRING" id="290340.AAur_2448"/>
<dbReference type="GeneID" id="92752681"/>
<dbReference type="KEGG" id="aau:AAur_2448"/>
<dbReference type="eggNOG" id="COG0335">
    <property type="taxonomic scope" value="Bacteria"/>
</dbReference>
<dbReference type="HOGENOM" id="CLU_103507_2_1_11"/>
<dbReference type="OrthoDB" id="9803541at2"/>
<dbReference type="Proteomes" id="UP000000637">
    <property type="component" value="Chromosome"/>
</dbReference>
<dbReference type="GO" id="GO:0022625">
    <property type="term" value="C:cytosolic large ribosomal subunit"/>
    <property type="evidence" value="ECO:0007669"/>
    <property type="project" value="TreeGrafter"/>
</dbReference>
<dbReference type="GO" id="GO:0003735">
    <property type="term" value="F:structural constituent of ribosome"/>
    <property type="evidence" value="ECO:0007669"/>
    <property type="project" value="InterPro"/>
</dbReference>
<dbReference type="GO" id="GO:0006412">
    <property type="term" value="P:translation"/>
    <property type="evidence" value="ECO:0007669"/>
    <property type="project" value="UniProtKB-UniRule"/>
</dbReference>
<dbReference type="FunFam" id="2.30.30.790:FF:000001">
    <property type="entry name" value="50S ribosomal protein L19"/>
    <property type="match status" value="1"/>
</dbReference>
<dbReference type="Gene3D" id="2.30.30.790">
    <property type="match status" value="1"/>
</dbReference>
<dbReference type="HAMAP" id="MF_00402">
    <property type="entry name" value="Ribosomal_bL19"/>
    <property type="match status" value="1"/>
</dbReference>
<dbReference type="InterPro" id="IPR001857">
    <property type="entry name" value="Ribosomal_bL19"/>
</dbReference>
<dbReference type="InterPro" id="IPR018257">
    <property type="entry name" value="Ribosomal_bL19_CS"/>
</dbReference>
<dbReference type="InterPro" id="IPR038657">
    <property type="entry name" value="Ribosomal_bL19_sf"/>
</dbReference>
<dbReference type="InterPro" id="IPR008991">
    <property type="entry name" value="Translation_prot_SH3-like_sf"/>
</dbReference>
<dbReference type="NCBIfam" id="TIGR01024">
    <property type="entry name" value="rplS_bact"/>
    <property type="match status" value="1"/>
</dbReference>
<dbReference type="PANTHER" id="PTHR15680:SF9">
    <property type="entry name" value="LARGE RIBOSOMAL SUBUNIT PROTEIN BL19M"/>
    <property type="match status" value="1"/>
</dbReference>
<dbReference type="PANTHER" id="PTHR15680">
    <property type="entry name" value="RIBOSOMAL PROTEIN L19"/>
    <property type="match status" value="1"/>
</dbReference>
<dbReference type="Pfam" id="PF01245">
    <property type="entry name" value="Ribosomal_L19"/>
    <property type="match status" value="1"/>
</dbReference>
<dbReference type="PIRSF" id="PIRSF002191">
    <property type="entry name" value="Ribosomal_L19"/>
    <property type="match status" value="1"/>
</dbReference>
<dbReference type="PRINTS" id="PR00061">
    <property type="entry name" value="RIBOSOMALL19"/>
</dbReference>
<dbReference type="SUPFAM" id="SSF50104">
    <property type="entry name" value="Translation proteins SH3-like domain"/>
    <property type="match status" value="1"/>
</dbReference>
<dbReference type="PROSITE" id="PS01015">
    <property type="entry name" value="RIBOSOMAL_L19"/>
    <property type="match status" value="1"/>
</dbReference>